<accession>Q5R7N3</accession>
<keyword id="KW-0007">Acetylation</keyword>
<keyword id="KW-0067">ATP-binding</keyword>
<keyword id="KW-0143">Chaperone</keyword>
<keyword id="KW-0378">Hydrolase</keyword>
<keyword id="KW-0479">Metal-binding</keyword>
<keyword id="KW-0496">Mitochondrion</keyword>
<keyword id="KW-1135">Mitochondrion nucleoid</keyword>
<keyword id="KW-0547">Nucleotide-binding</keyword>
<keyword id="KW-0597">Phosphoprotein</keyword>
<keyword id="KW-1185">Reference proteome</keyword>
<keyword id="KW-0809">Transit peptide</keyword>
<keyword id="KW-0862">Zinc</keyword>
<feature type="transit peptide" description="Mitochondrion" evidence="3">
    <location>
        <begin position="1"/>
        <end position="56"/>
    </location>
</feature>
<feature type="chain" id="PRO_0000314945" description="ATP-dependent clpX-like chaperone, mitochondrial">
    <location>
        <begin position="57"/>
        <end position="633"/>
    </location>
</feature>
<feature type="domain" description="ClpX-type ZB" evidence="4">
    <location>
        <begin position="93"/>
        <end position="146"/>
    </location>
</feature>
<feature type="region of interest" description="Disordered" evidence="5">
    <location>
        <begin position="68"/>
        <end position="100"/>
    </location>
</feature>
<feature type="region of interest" description="Disordered" evidence="5">
    <location>
        <begin position="598"/>
        <end position="633"/>
    </location>
</feature>
<feature type="compositionally biased region" description="Basic and acidic residues" evidence="5">
    <location>
        <begin position="69"/>
        <end position="83"/>
    </location>
</feature>
<feature type="compositionally biased region" description="Low complexity" evidence="5">
    <location>
        <begin position="84"/>
        <end position="93"/>
    </location>
</feature>
<feature type="compositionally biased region" description="Basic and acidic residues" evidence="5">
    <location>
        <begin position="598"/>
        <end position="610"/>
    </location>
</feature>
<feature type="compositionally biased region" description="Acidic residues" evidence="5">
    <location>
        <begin position="611"/>
        <end position="622"/>
    </location>
</feature>
<feature type="binding site" evidence="4">
    <location>
        <position position="105"/>
    </location>
    <ligand>
        <name>Zn(2+)</name>
        <dbReference type="ChEBI" id="CHEBI:29105"/>
    </ligand>
</feature>
<feature type="binding site" evidence="4">
    <location>
        <position position="108"/>
    </location>
    <ligand>
        <name>Zn(2+)</name>
        <dbReference type="ChEBI" id="CHEBI:29105"/>
    </ligand>
</feature>
<feature type="binding site" evidence="4">
    <location>
        <position position="127"/>
    </location>
    <ligand>
        <name>Zn(2+)</name>
        <dbReference type="ChEBI" id="CHEBI:29105"/>
    </ligand>
</feature>
<feature type="binding site" evidence="4">
    <location>
        <position position="130"/>
    </location>
    <ligand>
        <name>Zn(2+)</name>
        <dbReference type="ChEBI" id="CHEBI:29105"/>
    </ligand>
</feature>
<feature type="binding site" evidence="1">
    <location>
        <begin position="294"/>
        <end position="301"/>
    </location>
    <ligand>
        <name>ATP</name>
        <dbReference type="ChEBI" id="CHEBI:30616"/>
    </ligand>
</feature>
<feature type="modified residue" description="N6-acetyllysine" evidence="2">
    <location>
        <position position="437"/>
    </location>
</feature>
<feature type="modified residue" description="Phosphoserine" evidence="2">
    <location>
        <position position="617"/>
    </location>
</feature>
<proteinExistence type="evidence at transcript level"/>
<comment type="function">
    <text evidence="2">ATP-dependent chaperone that functions as an unfoldase. As part of the ClpXP protease complex, it recognizes specific protein substrates, unfolds them using energy derived from ATP hydrolysis, and then translocates them to the proteolytic subunit (CLPP) of the ClpXP complex for degradation. Thanks to its chaperone activity, it also functions in the incorporation of the pyridoxal phosphate cofactor into 5-aminolevulinate synthase, thereby activating 5-aminolevulinate (ALA) synthesis, the first step in heme biosynthesis. This chaperone is also involved in the control of mtDNA nucleoid distribution, by regulating mitochondrial transcription factor A (TFAM) activity.</text>
</comment>
<comment type="catalytic activity">
    <reaction evidence="2">
        <text>ATP + H2O = ADP + phosphate + H(+)</text>
        <dbReference type="Rhea" id="RHEA:13065"/>
        <dbReference type="ChEBI" id="CHEBI:15377"/>
        <dbReference type="ChEBI" id="CHEBI:15378"/>
        <dbReference type="ChEBI" id="CHEBI:30616"/>
        <dbReference type="ChEBI" id="CHEBI:43474"/>
        <dbReference type="ChEBI" id="CHEBI:456216"/>
        <dbReference type="EC" id="3.6.4.10"/>
    </reaction>
    <physiologicalReaction direction="left-to-right" evidence="2">
        <dbReference type="Rhea" id="RHEA:13066"/>
    </physiologicalReaction>
</comment>
<comment type="subunit">
    <text evidence="2">Homohexamer that forms a ring structure; this hexamerization requires ATP binding. Component of the ClpXP complex formed by the assembly of two CLPP heptameric rings with two CLPX hexameric rings, giving rise to a symmetrical structure with two central CLPP rings flanked by a CLPX ring at either end of the complex. Interacts with TFAM.</text>
</comment>
<comment type="subcellular location">
    <subcellularLocation>
        <location evidence="2">Mitochondrion</location>
    </subcellularLocation>
    <subcellularLocation>
        <location evidence="2">Mitochondrion matrix</location>
        <location evidence="2">Mitochondrion nucleoid</location>
    </subcellularLocation>
</comment>
<comment type="similarity">
    <text evidence="4">Belongs to the ClpX chaperone family.</text>
</comment>
<organism>
    <name type="scientific">Pongo abelii</name>
    <name type="common">Sumatran orangutan</name>
    <name type="synonym">Pongo pygmaeus abelii</name>
    <dbReference type="NCBI Taxonomy" id="9601"/>
    <lineage>
        <taxon>Eukaryota</taxon>
        <taxon>Metazoa</taxon>
        <taxon>Chordata</taxon>
        <taxon>Craniata</taxon>
        <taxon>Vertebrata</taxon>
        <taxon>Euteleostomi</taxon>
        <taxon>Mammalia</taxon>
        <taxon>Eutheria</taxon>
        <taxon>Euarchontoglires</taxon>
        <taxon>Primates</taxon>
        <taxon>Haplorrhini</taxon>
        <taxon>Catarrhini</taxon>
        <taxon>Hominidae</taxon>
        <taxon>Pongo</taxon>
    </lineage>
</organism>
<evidence type="ECO:0000250" key="1"/>
<evidence type="ECO:0000250" key="2">
    <source>
        <dbReference type="UniProtKB" id="O76031"/>
    </source>
</evidence>
<evidence type="ECO:0000255" key="3"/>
<evidence type="ECO:0000255" key="4">
    <source>
        <dbReference type="PROSITE-ProRule" id="PRU01250"/>
    </source>
</evidence>
<evidence type="ECO:0000256" key="5">
    <source>
        <dbReference type="SAM" id="MobiDB-lite"/>
    </source>
</evidence>
<dbReference type="EC" id="3.6.4.10" evidence="2"/>
<dbReference type="EMBL" id="CR860081">
    <property type="protein sequence ID" value="CAH92227.1"/>
    <property type="molecule type" value="mRNA"/>
</dbReference>
<dbReference type="SMR" id="Q5R7N3"/>
<dbReference type="FunCoup" id="Q5R7N3">
    <property type="interactions" value="2834"/>
</dbReference>
<dbReference type="STRING" id="9601.ENSPPYP00000007444"/>
<dbReference type="eggNOG" id="KOG0745">
    <property type="taxonomic scope" value="Eukaryota"/>
</dbReference>
<dbReference type="InParanoid" id="Q5R7N3"/>
<dbReference type="Proteomes" id="UP000001595">
    <property type="component" value="Unplaced"/>
</dbReference>
<dbReference type="GO" id="GO:0009368">
    <property type="term" value="C:endopeptidase Clp complex"/>
    <property type="evidence" value="ECO:0000250"/>
    <property type="project" value="UniProtKB"/>
</dbReference>
<dbReference type="GO" id="GO:0005759">
    <property type="term" value="C:mitochondrial matrix"/>
    <property type="evidence" value="ECO:0000250"/>
    <property type="project" value="UniProtKB"/>
</dbReference>
<dbReference type="GO" id="GO:0042645">
    <property type="term" value="C:mitochondrial nucleoid"/>
    <property type="evidence" value="ECO:0007669"/>
    <property type="project" value="UniProtKB-SubCell"/>
</dbReference>
<dbReference type="GO" id="GO:0005524">
    <property type="term" value="F:ATP binding"/>
    <property type="evidence" value="ECO:0007669"/>
    <property type="project" value="UniProtKB-KW"/>
</dbReference>
<dbReference type="GO" id="GO:0016887">
    <property type="term" value="F:ATP hydrolysis activity"/>
    <property type="evidence" value="ECO:0007669"/>
    <property type="project" value="InterPro"/>
</dbReference>
<dbReference type="GO" id="GO:0140662">
    <property type="term" value="F:ATP-dependent protein folding chaperone"/>
    <property type="evidence" value="ECO:0007669"/>
    <property type="project" value="InterPro"/>
</dbReference>
<dbReference type="GO" id="GO:0046983">
    <property type="term" value="F:protein dimerization activity"/>
    <property type="evidence" value="ECO:0007669"/>
    <property type="project" value="InterPro"/>
</dbReference>
<dbReference type="GO" id="GO:0051082">
    <property type="term" value="F:unfolded protein binding"/>
    <property type="evidence" value="ECO:0007669"/>
    <property type="project" value="InterPro"/>
</dbReference>
<dbReference type="GO" id="GO:0008270">
    <property type="term" value="F:zinc ion binding"/>
    <property type="evidence" value="ECO:0007669"/>
    <property type="project" value="InterPro"/>
</dbReference>
<dbReference type="GO" id="GO:0051603">
    <property type="term" value="P:proteolysis involved in protein catabolic process"/>
    <property type="evidence" value="ECO:0000250"/>
    <property type="project" value="UniProtKB"/>
</dbReference>
<dbReference type="CDD" id="cd19497">
    <property type="entry name" value="RecA-like_ClpX"/>
    <property type="match status" value="1"/>
</dbReference>
<dbReference type="FunFam" id="1.10.8.60:FF:000002">
    <property type="entry name" value="ATP-dependent Clp protease ATP-binding subunit ClpX"/>
    <property type="match status" value="1"/>
</dbReference>
<dbReference type="FunFam" id="3.40.50.300:FF:000378">
    <property type="entry name" value="ATP-dependent Clp protease ATP-binding subunit clpX-like, mitochondrial"/>
    <property type="match status" value="1"/>
</dbReference>
<dbReference type="FunFam" id="3.40.50.300:FF:003247">
    <property type="entry name" value="ATP-dependent Clp protease ATP-binding subunit clpX-like, mitochondrial"/>
    <property type="match status" value="1"/>
</dbReference>
<dbReference type="Gene3D" id="1.10.8.60">
    <property type="match status" value="1"/>
</dbReference>
<dbReference type="Gene3D" id="3.40.50.300">
    <property type="entry name" value="P-loop containing nucleotide triphosphate hydrolases"/>
    <property type="match status" value="1"/>
</dbReference>
<dbReference type="InterPro" id="IPR003593">
    <property type="entry name" value="AAA+_ATPase"/>
</dbReference>
<dbReference type="InterPro" id="IPR050052">
    <property type="entry name" value="ATP-dep_Clp_protease_ClpX"/>
</dbReference>
<dbReference type="InterPro" id="IPR003959">
    <property type="entry name" value="ATPase_AAA_core"/>
</dbReference>
<dbReference type="InterPro" id="IPR019489">
    <property type="entry name" value="Clp_ATPase_C"/>
</dbReference>
<dbReference type="InterPro" id="IPR004487">
    <property type="entry name" value="Clp_protease_ATP-bd_su_ClpX"/>
</dbReference>
<dbReference type="InterPro" id="IPR027417">
    <property type="entry name" value="P-loop_NTPase"/>
</dbReference>
<dbReference type="InterPro" id="IPR010603">
    <property type="entry name" value="Znf_CppX_C4"/>
</dbReference>
<dbReference type="NCBIfam" id="TIGR00382">
    <property type="entry name" value="clpX"/>
    <property type="match status" value="1"/>
</dbReference>
<dbReference type="NCBIfam" id="NF003745">
    <property type="entry name" value="PRK05342.1"/>
    <property type="match status" value="1"/>
</dbReference>
<dbReference type="PANTHER" id="PTHR48102:SF7">
    <property type="entry name" value="ATP-DEPENDENT CLP PROTEASE ATP-BINDING SUBUNIT CLPX-LIKE, MITOCHONDRIAL"/>
    <property type="match status" value="1"/>
</dbReference>
<dbReference type="PANTHER" id="PTHR48102">
    <property type="entry name" value="ATP-DEPENDENT CLP PROTEASE ATP-BINDING SUBUNIT CLPX-LIKE, MITOCHONDRIAL-RELATED"/>
    <property type="match status" value="1"/>
</dbReference>
<dbReference type="Pfam" id="PF07724">
    <property type="entry name" value="AAA_2"/>
    <property type="match status" value="1"/>
</dbReference>
<dbReference type="Pfam" id="PF10431">
    <property type="entry name" value="ClpB_D2-small"/>
    <property type="match status" value="1"/>
</dbReference>
<dbReference type="SMART" id="SM00382">
    <property type="entry name" value="AAA"/>
    <property type="match status" value="1"/>
</dbReference>
<dbReference type="SMART" id="SM01086">
    <property type="entry name" value="ClpB_D2-small"/>
    <property type="match status" value="1"/>
</dbReference>
<dbReference type="SUPFAM" id="SSF52540">
    <property type="entry name" value="P-loop containing nucleoside triphosphate hydrolases"/>
    <property type="match status" value="1"/>
</dbReference>
<dbReference type="PROSITE" id="PS51902">
    <property type="entry name" value="CLPX_ZB"/>
    <property type="match status" value="1"/>
</dbReference>
<gene>
    <name type="primary">CLPX</name>
</gene>
<sequence length="633" mass="69194">MPSCGACTCGAAAARLITSSLASAQRGISGGRIHMSVLGRLGTFEAQILRRAPLRSFTETPAYFASKDGISKDGSGDGNKKSASEGSSKKSGSGNSGKGGNQLRCPKCGDLCTHVETFVSSTRFVKCEKCHHFFVVLSEADSKKSIIKEPESAAEAVKLAFQQKPPPPPKKIYNYLDKYVVGQSFAKKVLSVAVYNHYKRIYNNIPANLRQQAEVEKQTSLTPRELEIRRREDEYRFTKLLQIAGISPHGNALGASMQQQVNQQIPQEKRGGEVLDSSHDDIKLEKSNILLLGPTGSGKTLLAQTLAKCLDVPFAICDCTTLTQAGYVGEDIESVIAKLLQDANYNVEKAQQGIVFLDEVDKIGSVPGIHQLRDVGGEGVQQGLLKLLEGTIVNVPEKNSRKLRGETVQVDTTNILFVASGAFNGLDRIISRRKNEKYLGFGTPSNLGKGRRAAAAADLANRSGESNTHQDIEEKDRLLRHVEARDLIEFGMIPEFVGRLPVVVPLHSLDEKTLVQILTEPRNAVIPQYQALFSMDKCELNVTEDALKAIARLALERKTGARGLRSIMEKLLLEPMFEVPNSDIVCVEVDKEVVEGKKEPGYIRAPTKESSEEEYDSGVEEEGWPRQADAANS</sequence>
<reference key="1">
    <citation type="submission" date="2004-11" db="EMBL/GenBank/DDBJ databases">
        <authorList>
            <consortium name="The German cDNA consortium"/>
        </authorList>
    </citation>
    <scope>NUCLEOTIDE SEQUENCE [LARGE SCALE MRNA]</scope>
    <source>
        <tissue>Kidney</tissue>
    </source>
</reference>
<name>CLPX_PONAB</name>
<protein>
    <recommendedName>
        <fullName>ATP-dependent clpX-like chaperone, mitochondrial</fullName>
        <ecNumber evidence="2">3.6.4.10</ecNumber>
    </recommendedName>
    <alternativeName>
        <fullName>ATP-dependent Clp protease ATP-binding subunit clpX-like, mitochondrial</fullName>
    </alternativeName>
</protein>